<name>FYV10_YEAST</name>
<evidence type="ECO:0000255" key="1">
    <source>
        <dbReference type="PROSITE-ProRule" id="PRU00058"/>
    </source>
</evidence>
<evidence type="ECO:0000255" key="2">
    <source>
        <dbReference type="PROSITE-ProRule" id="PRU01215"/>
    </source>
</evidence>
<evidence type="ECO:0000269" key="3">
    <source>
    </source>
</evidence>
<evidence type="ECO:0000269" key="4">
    <source>
    </source>
</evidence>
<evidence type="ECO:0000269" key="5">
    <source>
    </source>
</evidence>
<evidence type="ECO:0000269" key="6">
    <source>
    </source>
</evidence>
<evidence type="ECO:0000269" key="7">
    <source>
    </source>
</evidence>
<evidence type="ECO:0000269" key="8">
    <source>
    </source>
</evidence>
<evidence type="ECO:0000269" key="9">
    <source>
    </source>
</evidence>
<evidence type="ECO:0000269" key="10">
    <source>
    </source>
</evidence>
<evidence type="ECO:0000269" key="11">
    <source>
    </source>
</evidence>
<evidence type="ECO:0000269" key="12">
    <source>
    </source>
</evidence>
<evidence type="ECO:0000303" key="13">
    <source>
    </source>
</evidence>
<evidence type="ECO:0000303" key="14">
    <source>
    </source>
</evidence>
<evidence type="ECO:0000305" key="15"/>
<evidence type="ECO:0000305" key="16">
    <source>
    </source>
</evidence>
<evidence type="ECO:0000312" key="17">
    <source>
        <dbReference type="SGD" id="S000001359"/>
    </source>
</evidence>
<evidence type="ECO:0007744" key="18">
    <source>
        <dbReference type="PDB" id="6SWY"/>
    </source>
</evidence>
<evidence type="ECO:0007744" key="19">
    <source>
        <dbReference type="PDB" id="7NS4"/>
    </source>
</evidence>
<evidence type="ECO:0007744" key="20">
    <source>
        <dbReference type="PDB" id="8PMQ"/>
    </source>
</evidence>
<evidence type="ECO:0007829" key="21">
    <source>
        <dbReference type="PDB" id="6SWY"/>
    </source>
</evidence>
<reference key="1">
    <citation type="journal article" date="1997" name="Nature">
        <title>The nucleotide sequence of Saccharomyces cerevisiae chromosome IX.</title>
        <authorList>
            <person name="Churcher C.M."/>
            <person name="Bowman S."/>
            <person name="Badcock K."/>
            <person name="Bankier A.T."/>
            <person name="Brown D."/>
            <person name="Chillingworth T."/>
            <person name="Connor R."/>
            <person name="Devlin K."/>
            <person name="Gentles S."/>
            <person name="Hamlin N."/>
            <person name="Harris D.E."/>
            <person name="Horsnell T."/>
            <person name="Hunt S."/>
            <person name="Jagels K."/>
            <person name="Jones M."/>
            <person name="Lye G."/>
            <person name="Moule S."/>
            <person name="Odell C."/>
            <person name="Pearson D."/>
            <person name="Rajandream M.A."/>
            <person name="Rice P."/>
            <person name="Rowley N."/>
            <person name="Skelton J."/>
            <person name="Smith V."/>
            <person name="Walsh S.V."/>
            <person name="Whitehead S."/>
            <person name="Barrell B.G."/>
        </authorList>
    </citation>
    <scope>NUCLEOTIDE SEQUENCE [LARGE SCALE GENOMIC DNA]</scope>
    <source>
        <strain>ATCC 204508 / S288c</strain>
    </source>
</reference>
<reference key="2">
    <citation type="journal article" date="2014" name="G3 (Bethesda)">
        <title>The reference genome sequence of Saccharomyces cerevisiae: Then and now.</title>
        <authorList>
            <person name="Engel S.R."/>
            <person name="Dietrich F.S."/>
            <person name="Fisk D.G."/>
            <person name="Binkley G."/>
            <person name="Balakrishnan R."/>
            <person name="Costanzo M.C."/>
            <person name="Dwight S.S."/>
            <person name="Hitz B.C."/>
            <person name="Karra K."/>
            <person name="Nash R.S."/>
            <person name="Weng S."/>
            <person name="Wong E.D."/>
            <person name="Lloyd P."/>
            <person name="Skrzypek M.S."/>
            <person name="Miyasato S.R."/>
            <person name="Simison M."/>
            <person name="Cherry J.M."/>
        </authorList>
    </citation>
    <scope>GENOME REANNOTATION</scope>
    <source>
        <strain>ATCC 204508 / S288c</strain>
    </source>
</reference>
<reference key="3">
    <citation type="journal article" date="2007" name="Genome Res.">
        <title>Approaching a complete repository of sequence-verified protein-encoding clones for Saccharomyces cerevisiae.</title>
        <authorList>
            <person name="Hu Y."/>
            <person name="Rolfs A."/>
            <person name="Bhullar B."/>
            <person name="Murthy T.V.S."/>
            <person name="Zhu C."/>
            <person name="Berger M.F."/>
            <person name="Camargo A.A."/>
            <person name="Kelley F."/>
            <person name="McCarron S."/>
            <person name="Jepson D."/>
            <person name="Richardson A."/>
            <person name="Raphael J."/>
            <person name="Moreira D."/>
            <person name="Taycher E."/>
            <person name="Zuo D."/>
            <person name="Mohr S."/>
            <person name="Kane M.F."/>
            <person name="Williamson J."/>
            <person name="Simpson A.J.G."/>
            <person name="Bulyk M.L."/>
            <person name="Harlow E."/>
            <person name="Marsischky G."/>
            <person name="Kolodner R.D."/>
            <person name="LaBaer J."/>
        </authorList>
    </citation>
    <scope>NUCLEOTIDE SEQUENCE [GENOMIC DNA]</scope>
    <source>
        <strain>ATCC 204508 / S288c</strain>
    </source>
</reference>
<reference key="4">
    <citation type="journal article" date="2003" name="Genetics">
        <title>A Saccharomyces cerevisiae genome-wide mutant screen for altered sensitivity to K1 killer toxin.</title>
        <authorList>
            <person name="Page N."/>
            <person name="Gerard-Vincent M."/>
            <person name="Menard P."/>
            <person name="Beaulieu M."/>
            <person name="Azuma M."/>
            <person name="Dijkgraaf G.J.P."/>
            <person name="Li H."/>
            <person name="Marcoux J."/>
            <person name="Nguyen T."/>
            <person name="Dowse T."/>
            <person name="Sdicu A.-M."/>
            <person name="Bussey H."/>
        </authorList>
    </citation>
    <scope>FUNCTION</scope>
</reference>
<reference key="5">
    <citation type="journal article" date="2003" name="Mol. Biol. Cell">
        <title>Catabolite degradation of fructose-1,6-bisphosphatase in the yeast Saccharomyces cerevisiae: a genome-wide screen identifies eight novel GID genes and indicates the existence of two degradation pathways.</title>
        <authorList>
            <person name="Regelmann J."/>
            <person name="Schuele T."/>
            <person name="Josupeit F.S."/>
            <person name="Horak J."/>
            <person name="Rose M."/>
            <person name="Entian K.-D."/>
            <person name="Thumm M."/>
            <person name="Wolf D.H."/>
        </authorList>
    </citation>
    <scope>FUNCTION</scope>
</reference>
<reference key="6">
    <citation type="journal article" date="2003" name="Nature">
        <title>Global analysis of protein localization in budding yeast.</title>
        <authorList>
            <person name="Huh W.-K."/>
            <person name="Falvo J.V."/>
            <person name="Gerke L.C."/>
            <person name="Carroll A.S."/>
            <person name="Howson R.W."/>
            <person name="Weissman J.S."/>
            <person name="O'Shea E.K."/>
        </authorList>
    </citation>
    <scope>SUBCELLULAR LOCATION [LARGE SCALE ANALYSIS]</scope>
</reference>
<reference key="7">
    <citation type="journal article" date="2003" name="Nature">
        <title>Global analysis of protein expression in yeast.</title>
        <authorList>
            <person name="Ghaemmaghami S."/>
            <person name="Huh W.-K."/>
            <person name="Bower K."/>
            <person name="Howson R.W."/>
            <person name="Belle A."/>
            <person name="Dephoure N."/>
            <person name="O'Shea E.K."/>
            <person name="Weissman J.S."/>
        </authorList>
    </citation>
    <scope>LEVEL OF PROTEIN EXPRESSION [LARGE SCALE ANALYSIS]</scope>
</reference>
<reference key="8">
    <citation type="journal article" date="2006" name="BMC Bioinformatics">
        <title>PIPE: a protein-protein interaction prediction engine based on the re-occurring short polypeptide sequences between known interacting protein pairs.</title>
        <authorList>
            <person name="Pitre S."/>
            <person name="Dehne F."/>
            <person name="Chan A."/>
            <person name="Cheetham J."/>
            <person name="Duong A."/>
            <person name="Emili A."/>
            <person name="Gebbia M."/>
            <person name="Greenblatt J."/>
            <person name="Jessulat M."/>
            <person name="Krogan N."/>
            <person name="Luo X."/>
            <person name="Golshani A."/>
        </authorList>
    </citation>
    <scope>IDENTIFICATION IN GID COMPLEX</scope>
</reference>
<reference key="9">
    <citation type="journal article" date="2008" name="Mol. Biol. Cell">
        <title>The yeast GID complex, a novel ubiquitin ligase (E3) involved in the regulation of carbohydrate metabolism.</title>
        <authorList>
            <person name="Santt O."/>
            <person name="Pfirrmann T."/>
            <person name="Braun B."/>
            <person name="Juretschke J."/>
            <person name="Kimmig P."/>
            <person name="Scheel H."/>
            <person name="Hofmann K."/>
            <person name="Thumm M."/>
            <person name="Wolf D.H."/>
        </authorList>
    </citation>
    <scope>IDENTIFICATION IN GID COMPLEX</scope>
</reference>
<reference key="10">
    <citation type="journal article" date="2009" name="Science">
        <title>Global analysis of Cdk1 substrate phosphorylation sites provides insights into evolution.</title>
        <authorList>
            <person name="Holt L.J."/>
            <person name="Tuch B.B."/>
            <person name="Villen J."/>
            <person name="Johnson A.D."/>
            <person name="Gygi S.P."/>
            <person name="Morgan D.O."/>
        </authorList>
    </citation>
    <scope>IDENTIFICATION BY MASS SPECTROMETRY [LARGE SCALE ANALYSIS]</scope>
</reference>
<reference key="11">
    <citation type="journal article" date="2011" name="FEBS Lett.">
        <title>Gid9, a second RING finger protein contributes to the ubiquitin ligase activity of the Gid complex required for catabolite degradation.</title>
        <authorList>
            <person name="Braun B."/>
            <person name="Pfirrmann T."/>
            <person name="Menssen R."/>
            <person name="Hofmann K."/>
            <person name="Scheel H."/>
            <person name="Wolf D.H."/>
        </authorList>
    </citation>
    <scope>FUNCTION</scope>
    <scope>CATALYTIC ACTIVITY</scope>
    <scope>SUBUNIT</scope>
    <scope>INTERACTION WITH RMD5</scope>
    <scope>PATHWAY</scope>
    <scope>MUTAGENESIS OF CYS-434</scope>
</reference>
<reference key="12">
    <citation type="journal article" date="2012" name="J. Biol. Chem.">
        <title>Exploring the topology of the Gid complex, the E3 ubiquitin ligase involved in catabolite-induced degradation of gluconeogenic enzymes.</title>
        <authorList>
            <person name="Menssen R."/>
            <person name="Schweiggert J."/>
            <person name="Schreiner J."/>
            <person name="Kusevic D."/>
            <person name="Reuther J."/>
            <person name="Braun B."/>
            <person name="Wolf D.H."/>
        </authorList>
    </citation>
    <scope>SUBUNIT</scope>
    <scope>INTERACTION WITH VID28; GID8 AND RMD5</scope>
</reference>
<reference evidence="18" key="13">
    <citation type="journal article" date="2020" name="Mol. Cell">
        <title>Interconversion between anticipatory and active GID E3 ubiquitin ligase conformations via metabolically driven substrate receptor assembly.</title>
        <authorList>
            <person name="Qiao S."/>
            <person name="Langlois C.R."/>
            <person name="Chrustowicz J."/>
            <person name="Sherpa D."/>
            <person name="Karayel O."/>
            <person name="Hansen F.M."/>
            <person name="Beier V."/>
            <person name="von Gronau S."/>
            <person name="Bollschweiler D."/>
            <person name="Schafer T."/>
            <person name="Alpi A.F."/>
            <person name="Mann M."/>
            <person name="Prabu J.R."/>
            <person name="Schulman B.A."/>
        </authorList>
    </citation>
    <scope>STRUCTURE BY ELECTRON MICROSCOPY (3.20 ANGSTROMS) OF 1-431</scope>
</reference>
<reference evidence="19" key="14">
    <citation type="journal article" date="2021" name="Mol. Cell">
        <title>GID E3 ligase supramolecular chelate assembly configures multipronged ubiquitin targeting of an oligomeric metabolic enzyme.</title>
        <authorList>
            <person name="Sherpa D."/>
            <person name="Chrustowicz J."/>
            <person name="Qiao S."/>
            <person name="Langlois C.R."/>
            <person name="Hehl L.A."/>
            <person name="Gottemukkala K.V."/>
            <person name="Hansen F.M."/>
            <person name="Karayel O."/>
            <person name="von Gronau S."/>
            <person name="Prabu J.R."/>
            <person name="Mann M."/>
            <person name="Alpi A.F."/>
            <person name="Schulman B.A."/>
        </authorList>
    </citation>
    <scope>STRUCTURE BY ELECTRON MICROSCOPY (3.90 ANGSTROMS)</scope>
</reference>
<reference evidence="20" key="15">
    <citation type="journal article" date="2024" name="Mol. Cell">
        <title>Multisite phosphorylation dictates selective E2-E3 pairing as revealed by Ubc8/UBE2H-GID/CTLH assemblies.</title>
        <authorList>
            <person name="Chrustowicz J."/>
            <person name="Sherpa D."/>
            <person name="Li J."/>
            <person name="Langlois C.R."/>
            <person name="Papadopoulou E.C."/>
            <person name="Vu D.T."/>
            <person name="Hehl L.A."/>
            <person name="Karayel O."/>
            <person name="Beier V."/>
            <person name="von Gronau S."/>
            <person name="Muller J."/>
            <person name="Prabu J.R."/>
            <person name="Mann M."/>
            <person name="Kleiger G."/>
            <person name="Alpi A.F."/>
            <person name="Schulman B.A."/>
        </authorList>
    </citation>
    <scope>STRUCTURE BY ELECTRON MICROSCOPY (3.53 ANGSTROMS)</scope>
</reference>
<keyword id="KW-0002">3D-structure</keyword>
<keyword id="KW-0963">Cytoplasm</keyword>
<keyword id="KW-0479">Metal-binding</keyword>
<keyword id="KW-0539">Nucleus</keyword>
<keyword id="KW-1185">Reference proteome</keyword>
<keyword id="KW-0808">Transferase</keyword>
<keyword id="KW-0833">Ubl conjugation pathway</keyword>
<keyword id="KW-0862">Zinc</keyword>
<keyword id="KW-0863">Zinc-finger</keyword>
<comment type="function">
    <text evidence="3 4 9 10 11">Component of the GID E3 ligase complex recruiting N termini and catalyzing ubiquitination of proteins targeted for degradation. GID E3 is regulated through assembly with interchangeable N-degron-binding substrate receptors induced by distinct environmental perturbations (PubMed:12686616, PubMed:22044534, PubMed:31708416). Required for the adaptation to the presence of glucose in the growth medium; mediates in association with the substrate receptor VID24/GID4 the degradation of enzymes involved in gluconeogenesis when cells are shifted to glucose-containing medium (PubMed:12686616, PubMed:31708416). Required for proteasome-dependent catabolite degradation of fructose-1,6-bisphosphatase (FBP1), malate dehydrogenase (MDH2), and other gluconeogenic enzymes (PubMed:12686616, PubMed:22044534, PubMed:22645139). May catalyze ubiquitination of target proteins in complex with RMD5 (Probable). Required for survival upon exposure to K1 killer toxin (PubMed:12663529).</text>
</comment>
<comment type="catalytic activity">
    <reaction evidence="16">
        <text>S-ubiquitinyl-[E2 ubiquitin-conjugating enzyme]-L-cysteine + [acceptor protein]-L-lysine = [E2 ubiquitin-conjugating enzyme]-L-cysteine + N(6)-ubiquitinyl-[acceptor protein]-L-lysine.</text>
        <dbReference type="EC" id="2.3.2.27"/>
    </reaction>
</comment>
<comment type="pathway">
    <text evidence="9">Protein modification; protein ubiquitination.</text>
</comment>
<comment type="subunit">
    <text evidence="7 8 10 11 12">Identified in the GID/CTLH complex (PubMed:16872538, PubMed:18508925). In the absence of stress, the complex exists as an inactive anticipatory complex (GID(Ant)), composed of VID30/GID1, the E3 ubiquitin-ligase RMD5/GID2, VID28/GID5, GID8, and the RING-like subunit FYV10/GID9, awaiting a substrate receptor to form the active E3 ligase complex. When cells are shifted to glucose-containing medium, the substrate receptor VID24/GID4 is induced and becomes part of the complex, named GID(SR4) (PubMed:18508925, PubMed:22645139, PubMed:31708416). Additionally, GID7 transforms the GID(SR4) E3 ligase core into a higher-order supramolecular assembly (Chelator-GID(SR4)) specifically tailored for FBP1 ubiquitination (PubMed:33905682). Under osmotic or heat stress, the substrate receptor GID10 is induced and becomes part of the complex, named GID(SR10) (PubMed:31708416). Within the GID complex, interacts directly with VID28/GID5, GID8 and RMD5/GID2 (PubMed:22645139).</text>
</comment>
<comment type="interaction">
    <interactant intactId="EBI-25137">
        <id>P40492</id>
    </interactant>
    <interactant intactId="EBI-38868">
        <id>Q12508</id>
        <label>RMD5</label>
    </interactant>
    <organismsDiffer>false</organismsDiffer>
    <experiments>2</experiments>
</comment>
<comment type="subcellular location">
    <subcellularLocation>
        <location evidence="5">Cytoplasm</location>
    </subcellularLocation>
    <subcellularLocation>
        <location evidence="5">Nucleus</location>
    </subcellularLocation>
</comment>
<comment type="miscellaneous">
    <text evidence="6">Present with 784 molecules/cell in log phase SD medium.</text>
</comment>
<comment type="similarity">
    <text evidence="15">Belongs to the FYV10 family.</text>
</comment>
<comment type="caution">
    <text evidence="16">It is not certain that this protein has E3 ubiquitin-protein ligase activity by itself. Lacks a detectable RING-type zinc finger domain; the sequence in this region is highly divergent and lacks most of the expected Cys residues. Still, Cys-434 in this highly divergent region is required for ubiquitination of FBP1, suggesting a direct role in catalyzing ubiquitination.</text>
</comment>
<feature type="chain" id="PRO_0000202970" description="GID complex subunit 9">
    <location>
        <begin position="1"/>
        <end position="516"/>
    </location>
</feature>
<feature type="domain" description="CTLH" evidence="1">
    <location>
        <begin position="187"/>
        <end position="245"/>
    </location>
</feature>
<feature type="zinc finger region" description="RING-Gid-type" evidence="2">
    <location>
        <begin position="434"/>
        <end position="501"/>
    </location>
</feature>
<feature type="site" description="Essential for ubiquitin ligase activity" evidence="9">
    <location>
        <position position="434"/>
    </location>
</feature>
<feature type="mutagenesis site" description="Abolishes FBP1 ubiquitination and degradation." evidence="9">
    <original>C</original>
    <variation>S</variation>
    <location>
        <position position="434"/>
    </location>
</feature>
<feature type="helix" evidence="21">
    <location>
        <begin position="225"/>
        <end position="239"/>
    </location>
</feature>
<feature type="helix" evidence="21">
    <location>
        <begin position="244"/>
        <end position="253"/>
    </location>
</feature>
<feature type="turn" evidence="21">
    <location>
        <begin position="256"/>
        <end position="260"/>
    </location>
</feature>
<feature type="helix" evidence="21">
    <location>
        <begin position="262"/>
        <end position="278"/>
    </location>
</feature>
<feature type="helix" evidence="21">
    <location>
        <begin position="304"/>
        <end position="313"/>
    </location>
</feature>
<feature type="helix" evidence="21">
    <location>
        <begin position="346"/>
        <end position="349"/>
    </location>
</feature>
<feature type="helix" evidence="21">
    <location>
        <begin position="353"/>
        <end position="370"/>
    </location>
</feature>
<accession>P40492</accession>
<accession>D6VVJ0</accession>
<sequence>MAEKSIFNEPDVDFHLKLNQQLFHIPYELLSKRIKHTQAVINKETKSLHEHTAALNQIFEHNDVEHDELALAKITEMIRKVDHIERFLNTQIKSYCQILNRIKKRLEFFHELKDIKSQNSGTSHNGNNEGTRTKLIQWYQSYTNILIGDYLTRNNPIKYNSETKDHWNSGVVFLKQSQLDDLIDYDVLLEANRISTSLLHERNLLPLISWINENKKTLTKKSSILEFQARLQEYIELLKVDNYTDAIVCFQRFLLPFVKSNFTDLKLASGLLIFIKYCNDQKPTSSTSSGFDTEEIKSQSLPMKKDRIFQHFFHKSLPRITSKPAVNTTDYDKSSLINLQSGDFERYLNLLDDQRWSVLNDLFLSDFYSMYGISQNDPLLIYLSLGISSLKTRDCLHPSDDENGNQETETATTAEKEVEDLQLFTLHSLKRKNCPVCSETFKPITQALPFAHHIQSQLFENPILLPNGNVYDSKKLKKLAKTLKKQNLISLNPGQIMDPVDMKIFCESDSIKMYPT</sequence>
<proteinExistence type="evidence at protein level"/>
<gene>
    <name evidence="13" type="primary">FYV10</name>
    <name evidence="14" type="synonym">GID9</name>
    <name evidence="17" type="ordered locus">YIL097W</name>
</gene>
<protein>
    <recommendedName>
        <fullName evidence="15">GID complex subunit 9</fullName>
        <ecNumber evidence="16">2.3.2.27</ecNumber>
    </recommendedName>
    <alternativeName>
        <fullName evidence="13">Function required for yeast viability protein 10</fullName>
    </alternativeName>
    <alternativeName>
        <fullName evidence="14">Glucose-induced degradation protein 9</fullName>
    </alternativeName>
    <alternativeName>
        <fullName evidence="14">Probable E3 ubiquitin-protein ligase GID9</fullName>
    </alternativeName>
</protein>
<dbReference type="EC" id="2.3.2.27" evidence="16"/>
<dbReference type="EMBL" id="Z38125">
    <property type="protein sequence ID" value="CAA86284.1"/>
    <property type="molecule type" value="Genomic_DNA"/>
</dbReference>
<dbReference type="EMBL" id="AY692905">
    <property type="protein sequence ID" value="AAT92924.1"/>
    <property type="molecule type" value="Genomic_DNA"/>
</dbReference>
<dbReference type="EMBL" id="BK006942">
    <property type="protein sequence ID" value="DAA08456.1"/>
    <property type="molecule type" value="Genomic_DNA"/>
</dbReference>
<dbReference type="PIR" id="S48476">
    <property type="entry name" value="S48476"/>
</dbReference>
<dbReference type="RefSeq" id="NP_012169.1">
    <property type="nucleotide sequence ID" value="NM_001179445.1"/>
</dbReference>
<dbReference type="PDB" id="6SWY">
    <property type="method" value="EM"/>
    <property type="resolution" value="3.20 A"/>
    <property type="chains" value="9=1-431"/>
</dbReference>
<dbReference type="PDB" id="7NS4">
    <property type="method" value="EM"/>
    <property type="resolution" value="3.90 A"/>
    <property type="chains" value="i=1-516"/>
</dbReference>
<dbReference type="PDB" id="8PMQ">
    <property type="method" value="EM"/>
    <property type="resolution" value="3.53 A"/>
    <property type="chains" value="9=1-516"/>
</dbReference>
<dbReference type="PDBsum" id="6SWY"/>
<dbReference type="PDBsum" id="7NS4"/>
<dbReference type="PDBsum" id="8PMQ"/>
<dbReference type="EMDB" id="EMD-10333"/>
<dbReference type="EMDB" id="EMD-12560"/>
<dbReference type="EMDB" id="EMD-17764"/>
<dbReference type="SMR" id="P40492"/>
<dbReference type="BioGRID" id="34894">
    <property type="interactions" value="279"/>
</dbReference>
<dbReference type="ComplexPortal" id="CPX-301">
    <property type="entry name" value="GID E3 ubiquitin ligase complex, GID4 variant"/>
</dbReference>
<dbReference type="ComplexPortal" id="CPX-7884">
    <property type="entry name" value="GID E3 ubiquitin ligase complex, GID10 variant"/>
</dbReference>
<dbReference type="ComplexPortal" id="CPX-7885">
    <property type="entry name" value="GID E3 ubiquitin ligase complex, GID11 variant"/>
</dbReference>
<dbReference type="DIP" id="DIP-4148N"/>
<dbReference type="FunCoup" id="P40492">
    <property type="interactions" value="1048"/>
</dbReference>
<dbReference type="IntAct" id="P40492">
    <property type="interactions" value="11"/>
</dbReference>
<dbReference type="MINT" id="P40492"/>
<dbReference type="STRING" id="4932.YIL097W"/>
<dbReference type="iPTMnet" id="P40492"/>
<dbReference type="PaxDb" id="4932-YIL097W"/>
<dbReference type="PeptideAtlas" id="P40492"/>
<dbReference type="EnsemblFungi" id="YIL097W_mRNA">
    <property type="protein sequence ID" value="YIL097W"/>
    <property type="gene ID" value="YIL097W"/>
</dbReference>
<dbReference type="GeneID" id="854710"/>
<dbReference type="KEGG" id="sce:YIL097W"/>
<dbReference type="AGR" id="SGD:S000001359"/>
<dbReference type="SGD" id="S000001359">
    <property type="gene designation" value="FYV10"/>
</dbReference>
<dbReference type="VEuPathDB" id="FungiDB:YIL097W"/>
<dbReference type="eggNOG" id="KOG0396">
    <property type="taxonomic scope" value="Eukaryota"/>
</dbReference>
<dbReference type="GeneTree" id="ENSGT00940000153203"/>
<dbReference type="HOGENOM" id="CLU_027445_2_0_1"/>
<dbReference type="InParanoid" id="P40492"/>
<dbReference type="OMA" id="ANHETAR"/>
<dbReference type="OrthoDB" id="1933455at2759"/>
<dbReference type="BioCyc" id="YEAST:G3O-31356-MONOMER"/>
<dbReference type="Reactome" id="R-SCE-9861718">
    <property type="pathway name" value="Regulation of pyruvate metabolism"/>
</dbReference>
<dbReference type="UniPathway" id="UPA00143"/>
<dbReference type="BioGRID-ORCS" id="854710">
    <property type="hits" value="1 hit in 10 CRISPR screens"/>
</dbReference>
<dbReference type="PRO" id="PR:P40492"/>
<dbReference type="Proteomes" id="UP000002311">
    <property type="component" value="Chromosome IX"/>
</dbReference>
<dbReference type="RNAct" id="P40492">
    <property type="molecule type" value="protein"/>
</dbReference>
<dbReference type="GO" id="GO:0005737">
    <property type="term" value="C:cytoplasm"/>
    <property type="evidence" value="ECO:0007005"/>
    <property type="project" value="SGD"/>
</dbReference>
<dbReference type="GO" id="GO:0034657">
    <property type="term" value="C:GID complex"/>
    <property type="evidence" value="ECO:0000314"/>
    <property type="project" value="SGD"/>
</dbReference>
<dbReference type="GO" id="GO:0005634">
    <property type="term" value="C:nucleus"/>
    <property type="evidence" value="ECO:0007005"/>
    <property type="project" value="SGD"/>
</dbReference>
<dbReference type="GO" id="GO:0061630">
    <property type="term" value="F:ubiquitin protein ligase activity"/>
    <property type="evidence" value="ECO:0007669"/>
    <property type="project" value="InterPro"/>
</dbReference>
<dbReference type="GO" id="GO:0008270">
    <property type="term" value="F:zinc ion binding"/>
    <property type="evidence" value="ECO:0007669"/>
    <property type="project" value="UniProtKB-KW"/>
</dbReference>
<dbReference type="GO" id="GO:0043066">
    <property type="term" value="P:negative regulation of apoptotic process"/>
    <property type="evidence" value="ECO:0000315"/>
    <property type="project" value="SGD"/>
</dbReference>
<dbReference type="GO" id="GO:0045721">
    <property type="term" value="P:negative regulation of gluconeogenesis"/>
    <property type="evidence" value="ECO:0000315"/>
    <property type="project" value="SGD"/>
</dbReference>
<dbReference type="GO" id="GO:0043161">
    <property type="term" value="P:proteasome-mediated ubiquitin-dependent protein catabolic process"/>
    <property type="evidence" value="ECO:0000315"/>
    <property type="project" value="SGD"/>
</dbReference>
<dbReference type="GO" id="GO:0016567">
    <property type="term" value="P:protein ubiquitination"/>
    <property type="evidence" value="ECO:0007669"/>
    <property type="project" value="UniProtKB-UniPathway"/>
</dbReference>
<dbReference type="InterPro" id="IPR024964">
    <property type="entry name" value="CTLH/CRA"/>
</dbReference>
<dbReference type="InterPro" id="IPR006595">
    <property type="entry name" value="CTLH_C"/>
</dbReference>
<dbReference type="InterPro" id="IPR045098">
    <property type="entry name" value="Fyv10_fam"/>
</dbReference>
<dbReference type="InterPro" id="IPR044063">
    <property type="entry name" value="ZF_RING_GID"/>
</dbReference>
<dbReference type="PANTHER" id="PTHR12170:SF2">
    <property type="entry name" value="E3 UBIQUITIN-PROTEIN TRANSFERASE MAEA"/>
    <property type="match status" value="1"/>
</dbReference>
<dbReference type="PANTHER" id="PTHR12170">
    <property type="entry name" value="MACROPHAGE ERYTHROBLAST ATTACHER-RELATED"/>
    <property type="match status" value="1"/>
</dbReference>
<dbReference type="Pfam" id="PF10607">
    <property type="entry name" value="CTLH"/>
    <property type="match status" value="1"/>
</dbReference>
<dbReference type="SMART" id="SM00668">
    <property type="entry name" value="CTLH"/>
    <property type="match status" value="1"/>
</dbReference>
<dbReference type="PROSITE" id="PS50897">
    <property type="entry name" value="CTLH"/>
    <property type="match status" value="1"/>
</dbReference>
<dbReference type="PROSITE" id="PS51867">
    <property type="entry name" value="ZF_RING_GID"/>
    <property type="match status" value="1"/>
</dbReference>
<organism>
    <name type="scientific">Saccharomyces cerevisiae (strain ATCC 204508 / S288c)</name>
    <name type="common">Baker's yeast</name>
    <dbReference type="NCBI Taxonomy" id="559292"/>
    <lineage>
        <taxon>Eukaryota</taxon>
        <taxon>Fungi</taxon>
        <taxon>Dikarya</taxon>
        <taxon>Ascomycota</taxon>
        <taxon>Saccharomycotina</taxon>
        <taxon>Saccharomycetes</taxon>
        <taxon>Saccharomycetales</taxon>
        <taxon>Saccharomycetaceae</taxon>
        <taxon>Saccharomyces</taxon>
    </lineage>
</organism>